<proteinExistence type="evidence at protein level"/>
<feature type="chain" id="PRO_0000318298" description="PH and SEC7 domain-containing protein 1">
    <location>
        <begin position="1"/>
        <end position="1024"/>
    </location>
</feature>
<feature type="domain" description="SEC7" evidence="4">
    <location>
        <begin position="512"/>
        <end position="706"/>
    </location>
</feature>
<feature type="domain" description="PH" evidence="3">
    <location>
        <begin position="756"/>
        <end position="869"/>
    </location>
</feature>
<feature type="region of interest" description="Disordered" evidence="5">
    <location>
        <begin position="25"/>
        <end position="98"/>
    </location>
</feature>
<feature type="region of interest" description="Disordered" evidence="5">
    <location>
        <begin position="113"/>
        <end position="230"/>
    </location>
</feature>
<feature type="region of interest" description="Disordered" evidence="5">
    <location>
        <begin position="246"/>
        <end position="401"/>
    </location>
</feature>
<feature type="region of interest" description="Disordered" evidence="5">
    <location>
        <begin position="430"/>
        <end position="536"/>
    </location>
</feature>
<feature type="region of interest" description="Disordered" evidence="5">
    <location>
        <begin position="976"/>
        <end position="1024"/>
    </location>
</feature>
<feature type="coiled-coil region" evidence="2">
    <location>
        <begin position="898"/>
        <end position="924"/>
    </location>
</feature>
<feature type="compositionally biased region" description="Pro residues" evidence="5">
    <location>
        <begin position="71"/>
        <end position="95"/>
    </location>
</feature>
<feature type="compositionally biased region" description="Polar residues" evidence="5">
    <location>
        <begin position="215"/>
        <end position="230"/>
    </location>
</feature>
<feature type="compositionally biased region" description="Acidic residues" evidence="5">
    <location>
        <begin position="300"/>
        <end position="313"/>
    </location>
</feature>
<feature type="compositionally biased region" description="Pro residues" evidence="5">
    <location>
        <begin position="327"/>
        <end position="342"/>
    </location>
</feature>
<feature type="compositionally biased region" description="Acidic residues" evidence="5">
    <location>
        <begin position="349"/>
        <end position="369"/>
    </location>
</feature>
<feature type="compositionally biased region" description="Pro residues" evidence="5">
    <location>
        <begin position="445"/>
        <end position="463"/>
    </location>
</feature>
<feature type="compositionally biased region" description="Low complexity" evidence="5">
    <location>
        <begin position="987"/>
        <end position="1004"/>
    </location>
</feature>
<feature type="modified residue" description="Phosphoserine" evidence="1">
    <location>
        <position position="126"/>
    </location>
</feature>
<feature type="modified residue" description="Phosphoserine" evidence="1">
    <location>
        <position position="156"/>
    </location>
</feature>
<feature type="modified residue" description="Phosphoserine" evidence="1">
    <location>
        <position position="720"/>
    </location>
</feature>
<feature type="splice variant" id="VSP_031186" description="In isoform 2." evidence="9">
    <location>
        <begin position="1"/>
        <end position="379"/>
    </location>
</feature>
<feature type="mutagenesis site" description="Loss of GEF activity, loss of ARF6 localization to the cleavage furrow and, later in cytokinesis, to the midbody ring." evidence="6">
    <original>E</original>
    <variation>K</variation>
    <location>
        <position position="621"/>
    </location>
</feature>
<feature type="mutagenesis site" description="Loss of localization to the plasma membrane during interphase and to the cleavage furrow during cytokinesis. No effect on ARF6 localization to the cleavage furrow and, later in cytokinesis, to the midbody ring." evidence="6">
    <original>RK</original>
    <variation>EE</variation>
    <location>
        <begin position="765"/>
        <end position="766"/>
    </location>
</feature>
<feature type="sequence conflict" description="In Ref. 1; CAA68002 and 5; AAI42690." evidence="10" ref="1 5">
    <original>A</original>
    <variation>T</variation>
    <location>
        <position position="109"/>
    </location>
</feature>
<feature type="sequence conflict" description="In Ref. 1; CAA68002." evidence="10" ref="1">
    <original>A</original>
    <variation>T</variation>
    <location>
        <position position="462"/>
    </location>
</feature>
<feature type="sequence conflict" description="In Ref. 1; CAA68002." evidence="10" ref="1">
    <original>E</original>
    <variation>D</variation>
    <location>
        <position position="537"/>
    </location>
</feature>
<name>PSD1_HUMAN</name>
<gene>
    <name type="primary">PSD</name>
    <name type="synonym">EFA6</name>
    <name evidence="8" type="synonym">EFA6A</name>
    <name type="synonym">KIAA2011</name>
    <name type="synonym">PSD1</name>
    <name type="synonym">TYL</name>
</gene>
<comment type="function">
    <text evidence="1 6">Guanine nucleotide exchange factor for ARF6 (PubMed:23603394). Induces cytoskeletal remodeling (By similarity).</text>
</comment>
<comment type="subunit">
    <text evidence="1">Interacts with ACTN1. Interacts (ARF6-bound form) with KCNK1; does not interact with KCNK1 in the absence of ARF6 (By similarity).</text>
</comment>
<comment type="interaction">
    <interactant intactId="EBI-719999">
        <id>A5PKW4</id>
    </interactant>
    <interactant intactId="EBI-2214043">
        <id>P70398</id>
        <label>Usp9x</label>
    </interactant>
    <organismsDiffer>true</organismsDiffer>
    <experiments>3</experiments>
</comment>
<comment type="subcellular location">
    <subcellularLocation>
        <location evidence="6">Cell membrane</location>
    </subcellularLocation>
    <subcellularLocation>
        <location evidence="6">Cell projection</location>
        <location evidence="6">Ruffle membrane</location>
    </subcellularLocation>
    <subcellularLocation>
        <location evidence="6">Cleavage furrow</location>
    </subcellularLocation>
    <text evidence="6">Distributed uniformly on the plasma membrane, as well as throughout the cytoplasm during metaphase. Subsequently concentrated at patches in the equatorial region at the onset of cytokinesis, and becomes distributed in the equatorial region concurrent with cleavage furrow ingression. In later cytokinesis phases, fades away from the cleavage furrow and becomes uniformly distributed throughout the plasma membrane.</text>
</comment>
<comment type="alternative products">
    <event type="alternative splicing"/>
    <isoform>
        <id>A5PKW4-1</id>
        <name>1</name>
        <sequence type="displayed"/>
    </isoform>
    <isoform>
        <id>A5PKW4-2</id>
        <name>2</name>
        <sequence type="described" ref="VSP_031186"/>
    </isoform>
    <text>Additional isoforms may exist.</text>
</comment>
<comment type="tissue specificity">
    <text evidence="7">Isoform 2 is expressed in the brain.</text>
</comment>
<comment type="similarity">
    <text evidence="10">Belongs to the PSD family.</text>
</comment>
<comment type="sequence caution" evidence="10">
    <conflict type="erroneous initiation">
        <sequence resource="EMBL-CDS" id="BAC23107"/>
    </conflict>
    <text>Extended N-terminus.</text>
</comment>
<dbReference type="EMBL" id="X99688">
    <property type="protein sequence ID" value="CAA68002.1"/>
    <property type="molecule type" value="mRNA"/>
</dbReference>
<dbReference type="EMBL" id="AB095931">
    <property type="protein sequence ID" value="BAC23107.1"/>
    <property type="status" value="ALT_INIT"/>
    <property type="molecule type" value="mRNA"/>
</dbReference>
<dbReference type="EMBL" id="AL121928">
    <property type="status" value="NOT_ANNOTATED_CDS"/>
    <property type="molecule type" value="Genomic_DNA"/>
</dbReference>
<dbReference type="EMBL" id="CH471066">
    <property type="protein sequence ID" value="EAW49693.1"/>
    <property type="molecule type" value="Genomic_DNA"/>
</dbReference>
<dbReference type="EMBL" id="CH471066">
    <property type="protein sequence ID" value="EAW49694.1"/>
    <property type="molecule type" value="Genomic_DNA"/>
</dbReference>
<dbReference type="EMBL" id="BC142643">
    <property type="protein sequence ID" value="AAI42644.1"/>
    <property type="molecule type" value="mRNA"/>
</dbReference>
<dbReference type="EMBL" id="BC142689">
    <property type="protein sequence ID" value="AAI42690.1"/>
    <property type="molecule type" value="mRNA"/>
</dbReference>
<dbReference type="CCDS" id="CCDS31272.1">
    <molecule id="A5PKW4-1"/>
</dbReference>
<dbReference type="CCDS" id="CCDS73187.1">
    <molecule id="A5PKW4-2"/>
</dbReference>
<dbReference type="PIR" id="G01205">
    <property type="entry name" value="G01205"/>
</dbReference>
<dbReference type="RefSeq" id="NP_001257894.1">
    <molecule id="A5PKW4-1"/>
    <property type="nucleotide sequence ID" value="NM_001270965.2"/>
</dbReference>
<dbReference type="RefSeq" id="NP_001257895.1">
    <molecule id="A5PKW4-2"/>
    <property type="nucleotide sequence ID" value="NM_001270966.2"/>
</dbReference>
<dbReference type="RefSeq" id="NP_002770.3">
    <molecule id="A5PKW4-1"/>
    <property type="nucleotide sequence ID" value="NM_002779.4"/>
</dbReference>
<dbReference type="RefSeq" id="XP_011538270.1">
    <property type="nucleotide sequence ID" value="XM_011539968.1"/>
</dbReference>
<dbReference type="RefSeq" id="XP_011538271.1">
    <property type="nucleotide sequence ID" value="XM_011539969.2"/>
</dbReference>
<dbReference type="RefSeq" id="XP_016871922.1">
    <property type="nucleotide sequence ID" value="XM_017016433.1"/>
</dbReference>
<dbReference type="RefSeq" id="XP_016871923.1">
    <property type="nucleotide sequence ID" value="XM_017016434.1"/>
</dbReference>
<dbReference type="SMR" id="A5PKW4"/>
<dbReference type="BioGRID" id="111641">
    <property type="interactions" value="5"/>
</dbReference>
<dbReference type="FunCoup" id="A5PKW4">
    <property type="interactions" value="342"/>
</dbReference>
<dbReference type="IntAct" id="A5PKW4">
    <property type="interactions" value="12"/>
</dbReference>
<dbReference type="MINT" id="A5PKW4"/>
<dbReference type="STRING" id="9606.ENSP00000384830"/>
<dbReference type="ChEMBL" id="CHEMBL4523105"/>
<dbReference type="DrugCentral" id="A5PKW4"/>
<dbReference type="GlyGen" id="A5PKW4">
    <property type="glycosylation" value="3 sites, 1 O-linked glycan (1 site)"/>
</dbReference>
<dbReference type="iPTMnet" id="A5PKW4"/>
<dbReference type="PhosphoSitePlus" id="A5PKW4"/>
<dbReference type="BioMuta" id="PSD"/>
<dbReference type="MassIVE" id="A5PKW4"/>
<dbReference type="PaxDb" id="9606-ENSP00000020673"/>
<dbReference type="PeptideAtlas" id="A5PKW4"/>
<dbReference type="ProteomicsDB" id="723">
    <molecule id="A5PKW4-1"/>
</dbReference>
<dbReference type="ProteomicsDB" id="724">
    <molecule id="A5PKW4-2"/>
</dbReference>
<dbReference type="Antibodypedia" id="31428">
    <property type="antibodies" value="50 antibodies from 16 providers"/>
</dbReference>
<dbReference type="DNASU" id="5662"/>
<dbReference type="Ensembl" id="ENST00000020673.6">
    <molecule id="A5PKW4-1"/>
    <property type="protein sequence ID" value="ENSP00000020673.5"/>
    <property type="gene ID" value="ENSG00000059915.17"/>
</dbReference>
<dbReference type="Ensembl" id="ENST00000406432.5">
    <molecule id="A5PKW4-1"/>
    <property type="protein sequence ID" value="ENSP00000384830.1"/>
    <property type="gene ID" value="ENSG00000059915.17"/>
</dbReference>
<dbReference type="Ensembl" id="ENST00000611678.4">
    <molecule id="A5PKW4-2"/>
    <property type="protein sequence ID" value="ENSP00000481250.1"/>
    <property type="gene ID" value="ENSG00000059915.17"/>
</dbReference>
<dbReference type="GeneID" id="5662"/>
<dbReference type="KEGG" id="hsa:5662"/>
<dbReference type="MANE-Select" id="ENST00000020673.6">
    <property type="protein sequence ID" value="ENSP00000020673.5"/>
    <property type="RefSeq nucleotide sequence ID" value="NM_002779.5"/>
    <property type="RefSeq protein sequence ID" value="NP_002770.3"/>
</dbReference>
<dbReference type="UCSC" id="uc001kvg.3">
    <molecule id="A5PKW4-1"/>
    <property type="organism name" value="human"/>
</dbReference>
<dbReference type="AGR" id="HGNC:9507"/>
<dbReference type="CTD" id="5662"/>
<dbReference type="DisGeNET" id="5662"/>
<dbReference type="GeneCards" id="PSD"/>
<dbReference type="HGNC" id="HGNC:9507">
    <property type="gene designation" value="PSD"/>
</dbReference>
<dbReference type="HPA" id="ENSG00000059915">
    <property type="expression patterns" value="Tissue enhanced (brain, intestine)"/>
</dbReference>
<dbReference type="MalaCards" id="PSD"/>
<dbReference type="MIM" id="602327">
    <property type="type" value="gene"/>
</dbReference>
<dbReference type="neXtProt" id="NX_A5PKW4"/>
<dbReference type="OpenTargets" id="ENSG00000059915"/>
<dbReference type="PharmGKB" id="PA33854"/>
<dbReference type="VEuPathDB" id="HostDB:ENSG00000059915"/>
<dbReference type="eggNOG" id="KOG0932">
    <property type="taxonomic scope" value="Eukaryota"/>
</dbReference>
<dbReference type="GeneTree" id="ENSGT00940000155061"/>
<dbReference type="HOGENOM" id="CLU_011021_4_0_1"/>
<dbReference type="InParanoid" id="A5PKW4"/>
<dbReference type="OMA" id="AKWEFFF"/>
<dbReference type="OrthoDB" id="2157641at2759"/>
<dbReference type="PAN-GO" id="A5PKW4">
    <property type="GO annotations" value="0 GO annotations based on evolutionary models"/>
</dbReference>
<dbReference type="PhylomeDB" id="A5PKW4"/>
<dbReference type="TreeFam" id="TF319755"/>
<dbReference type="PathwayCommons" id="A5PKW4"/>
<dbReference type="SignaLink" id="A5PKW4"/>
<dbReference type="BioGRID-ORCS" id="5662">
    <property type="hits" value="13 hits in 1148 CRISPR screens"/>
</dbReference>
<dbReference type="CD-CODE" id="FB4E32DD">
    <property type="entry name" value="Presynaptic clusters and postsynaptic densities"/>
</dbReference>
<dbReference type="ChiTaRS" id="PSD">
    <property type="organism name" value="human"/>
</dbReference>
<dbReference type="GenomeRNAi" id="5662"/>
<dbReference type="Pharos" id="A5PKW4">
    <property type="development level" value="Tchem"/>
</dbReference>
<dbReference type="PRO" id="PR:A5PKW4"/>
<dbReference type="Proteomes" id="UP000005640">
    <property type="component" value="Chromosome 10"/>
</dbReference>
<dbReference type="RNAct" id="A5PKW4">
    <property type="molecule type" value="protein"/>
</dbReference>
<dbReference type="Bgee" id="ENSG00000059915">
    <property type="expression patterns" value="Expressed in right frontal lobe and 121 other cell types or tissues"/>
</dbReference>
<dbReference type="ExpressionAtlas" id="A5PKW4">
    <property type="expression patterns" value="baseline and differential"/>
</dbReference>
<dbReference type="GO" id="GO:0032154">
    <property type="term" value="C:cleavage furrow"/>
    <property type="evidence" value="ECO:0000314"/>
    <property type="project" value="UniProtKB"/>
</dbReference>
<dbReference type="GO" id="GO:0043197">
    <property type="term" value="C:dendritic spine"/>
    <property type="evidence" value="ECO:0007669"/>
    <property type="project" value="Ensembl"/>
</dbReference>
<dbReference type="GO" id="GO:0099092">
    <property type="term" value="C:postsynaptic density, intracellular component"/>
    <property type="evidence" value="ECO:0007669"/>
    <property type="project" value="Ensembl"/>
</dbReference>
<dbReference type="GO" id="GO:0032587">
    <property type="term" value="C:ruffle membrane"/>
    <property type="evidence" value="ECO:0000314"/>
    <property type="project" value="UniProtKB"/>
</dbReference>
<dbReference type="GO" id="GO:0005085">
    <property type="term" value="F:guanyl-nucleotide exchange factor activity"/>
    <property type="evidence" value="ECO:0000314"/>
    <property type="project" value="UniProtKB"/>
</dbReference>
<dbReference type="GO" id="GO:0005543">
    <property type="term" value="F:phospholipid binding"/>
    <property type="evidence" value="ECO:0007669"/>
    <property type="project" value="InterPro"/>
</dbReference>
<dbReference type="GO" id="GO:0031175">
    <property type="term" value="P:neuron projection development"/>
    <property type="evidence" value="ECO:0007669"/>
    <property type="project" value="Ensembl"/>
</dbReference>
<dbReference type="GO" id="GO:0032012">
    <property type="term" value="P:regulation of ARF protein signal transduction"/>
    <property type="evidence" value="ECO:0007669"/>
    <property type="project" value="InterPro"/>
</dbReference>
<dbReference type="GO" id="GO:0007165">
    <property type="term" value="P:signal transduction"/>
    <property type="evidence" value="ECO:0000303"/>
    <property type="project" value="UniProtKB"/>
</dbReference>
<dbReference type="CDD" id="cd13295">
    <property type="entry name" value="PH_EFA6"/>
    <property type="match status" value="1"/>
</dbReference>
<dbReference type="CDD" id="cd00171">
    <property type="entry name" value="Sec7"/>
    <property type="match status" value="1"/>
</dbReference>
<dbReference type="FunFam" id="1.10.1000.11:FF:000004">
    <property type="entry name" value="PH and SEC7 domain-containing protein 2"/>
    <property type="match status" value="1"/>
</dbReference>
<dbReference type="FunFam" id="2.30.29.30:FF:000054">
    <property type="entry name" value="PH and SEC7 domain-containing protein 3"/>
    <property type="match status" value="1"/>
</dbReference>
<dbReference type="Gene3D" id="1.10.1000.11">
    <property type="entry name" value="Arf Nucleotide-binding Site Opener,domain 2"/>
    <property type="match status" value="1"/>
</dbReference>
<dbReference type="Gene3D" id="2.30.29.30">
    <property type="entry name" value="Pleckstrin-homology domain (PH domain)/Phosphotyrosine-binding domain (PTB)"/>
    <property type="match status" value="1"/>
</dbReference>
<dbReference type="InterPro" id="IPR011993">
    <property type="entry name" value="PH-like_dom_sf"/>
</dbReference>
<dbReference type="InterPro" id="IPR041681">
    <property type="entry name" value="PH_9"/>
</dbReference>
<dbReference type="InterPro" id="IPR001605">
    <property type="entry name" value="PH_dom-spectrin-type"/>
</dbReference>
<dbReference type="InterPro" id="IPR001849">
    <property type="entry name" value="PH_domain"/>
</dbReference>
<dbReference type="InterPro" id="IPR023394">
    <property type="entry name" value="Sec7_C_sf"/>
</dbReference>
<dbReference type="InterPro" id="IPR000904">
    <property type="entry name" value="Sec7_dom"/>
</dbReference>
<dbReference type="InterPro" id="IPR035999">
    <property type="entry name" value="Sec7_dom_sf"/>
</dbReference>
<dbReference type="PANTHER" id="PTHR10663">
    <property type="entry name" value="GUANYL-NUCLEOTIDE EXCHANGE FACTOR"/>
    <property type="match status" value="1"/>
</dbReference>
<dbReference type="PANTHER" id="PTHR10663:SF334">
    <property type="entry name" value="PH AND SEC7 DOMAIN-CONTAINING PROTEIN 1"/>
    <property type="match status" value="1"/>
</dbReference>
<dbReference type="Pfam" id="PF15410">
    <property type="entry name" value="PH_9"/>
    <property type="match status" value="1"/>
</dbReference>
<dbReference type="Pfam" id="PF01369">
    <property type="entry name" value="Sec7"/>
    <property type="match status" value="1"/>
</dbReference>
<dbReference type="PRINTS" id="PR00683">
    <property type="entry name" value="SPECTRINPH"/>
</dbReference>
<dbReference type="SMART" id="SM00233">
    <property type="entry name" value="PH"/>
    <property type="match status" value="1"/>
</dbReference>
<dbReference type="SMART" id="SM00222">
    <property type="entry name" value="Sec7"/>
    <property type="match status" value="1"/>
</dbReference>
<dbReference type="SUPFAM" id="SSF50729">
    <property type="entry name" value="PH domain-like"/>
    <property type="match status" value="1"/>
</dbReference>
<dbReference type="SUPFAM" id="SSF48425">
    <property type="entry name" value="Sec7 domain"/>
    <property type="match status" value="1"/>
</dbReference>
<dbReference type="PROSITE" id="PS50003">
    <property type="entry name" value="PH_DOMAIN"/>
    <property type="match status" value="1"/>
</dbReference>
<dbReference type="PROSITE" id="PS50190">
    <property type="entry name" value="SEC7"/>
    <property type="match status" value="1"/>
</dbReference>
<organism>
    <name type="scientific">Homo sapiens</name>
    <name type="common">Human</name>
    <dbReference type="NCBI Taxonomy" id="9606"/>
    <lineage>
        <taxon>Eukaryota</taxon>
        <taxon>Metazoa</taxon>
        <taxon>Chordata</taxon>
        <taxon>Craniata</taxon>
        <taxon>Vertebrata</taxon>
        <taxon>Euteleostomi</taxon>
        <taxon>Mammalia</taxon>
        <taxon>Eutheria</taxon>
        <taxon>Euarchontoglires</taxon>
        <taxon>Primates</taxon>
        <taxon>Haplorrhini</taxon>
        <taxon>Catarrhini</taxon>
        <taxon>Hominidae</taxon>
        <taxon>Homo</taxon>
    </lineage>
</organism>
<accession>A5PKW4</accession>
<accession>B1AKX7</accession>
<accession>D3DR87</accession>
<accession>Q15673</accession>
<accession>Q8IVG0</accession>
<keyword id="KW-0025">Alternative splicing</keyword>
<keyword id="KW-1003">Cell membrane</keyword>
<keyword id="KW-0966">Cell projection</keyword>
<keyword id="KW-0175">Coiled coil</keyword>
<keyword id="KW-0344">Guanine-nucleotide releasing factor</keyword>
<keyword id="KW-0472">Membrane</keyword>
<keyword id="KW-0597">Phosphoprotein</keyword>
<keyword id="KW-1267">Proteomics identification</keyword>
<keyword id="KW-1185">Reference proteome</keyword>
<sequence>MAQGAMRFCSEGDCAISPPRCPRRWLPEGPVPQSPPASMYGSTGSLLRRVAGPGPRGRELGRVTAPCTPLRGPPSPRVAPSPWAPSSPTGQPPPGAQSSVVIFRFVEKASVRPLNGLPAPGGLSRSWDLGGVSPPRPTPALGPGSNRKLRLEASTSDPLPARGGSALPGSRNLVHGPPAPPQVGADGLYSSLPNGLGGPPERLATLFGGPADTGFLNQGDTWSSPREVSSHAQRIARAKWEFFYGSLDPPSSGAKPPEQAPPSPPGVGSRQGSGVAVGRAAKYSETDLDTVPLRCYRETDIDEVLAEREEADSAIESQPSSEGPPGTAYPPAPRPGPLPGPHPSLGSGNEDEDDDEAGGEEDVDDEVFEASEGARPGSRMPLKSPVPFLPGTSPSADGPDSFSCVFEAILESHRAKGTSYTSLASLEALASPGPTQSPFFTFELPPQPPAPRPDPPAPAPLAPLEPDSGTSSAADGPWTQRGEEEEAEARAKLAPGREPPSPCHSEDSLGLGAAPLGSEPPLSQLVSDSDSELDSTERLALGSTDTLSNGQKADLEAAQRLAKRLYRLDGFRKADVARHLGKNNDFSKLVAGEYLKFFVFTGMTLDQALRVFLKELALMGETQERERVLAHFSQRYFQCNPEALSSEDGAHTLTCALMLLNTDLHGHNIGKRMTCGDFIGNLEGLNDGGDFPRELLKALYSSIKNEKLQWAIDEEELRRSLSELADPNPKVIKRISGGSGSGSSPFLDLTPEPGAAVYKHGALVRKVHADPDCRKTPRGKRGWKSFHGILKGMILYLQKEEYKPGKALSETELKNAISIHHALATRASDYSKRPHVFYLRTADWRVFLFQAPSLEQMQSWITRINVVAAMFSAPPFPAAVSSQKKFSRPLLPSAATRLSQEEQVRTHEAKLKAMASELREHRAAQLGKKGRGKEAEEQRQKEAYLEFEKSRYSTYAALLRVKLKAGSEELDAVEAALAQAGSTEDGLPPSHSSPSLQPKPSSQPRAQRHSSEPRPGAGSGRRKP</sequence>
<protein>
    <recommendedName>
        <fullName>PH and SEC7 domain-containing protein 1</fullName>
    </recommendedName>
    <alternativeName>
        <fullName>Exchange factor for ADP-ribosylation factor guanine nucleotide factor 6</fullName>
        <shortName>Exchange factor for ARF6</shortName>
    </alternativeName>
    <alternativeName>
        <fullName>Exchange factor for ARF6 A</fullName>
    </alternativeName>
    <alternativeName>
        <fullName>Pleckstrin homology and SEC7 domain-containing protein 1</fullName>
    </alternativeName>
</protein>
<reference key="1">
    <citation type="journal article" date="1997" name="Genomics">
        <title>Identification of a novel gene, PSD, adjacent to NFKB2/lyt-10, which contains Sec7 and pleckstrin-homology domains.</title>
        <authorList>
            <person name="Perletti L."/>
            <person name="Talarico D."/>
            <person name="Trecca D."/>
            <person name="Ronchetti D."/>
            <person name="Fracchiolla N.S."/>
            <person name="Maiolo A.T."/>
            <person name="Neri A."/>
        </authorList>
    </citation>
    <scope>NUCLEOTIDE SEQUENCE [MRNA] (ISOFORM 2)</scope>
    <scope>TISSUE SPECIFICITY</scope>
    <source>
        <tissue>Brain</tissue>
    </source>
</reference>
<reference key="2">
    <citation type="submission" date="2002-11" db="EMBL/GenBank/DDBJ databases">
        <title>The nucleotide sequence of a long cDNA clone isolated from human.</title>
        <authorList>
            <person name="Nagase T."/>
            <person name="Kikuno R."/>
            <person name="Ohara O."/>
        </authorList>
    </citation>
    <scope>NUCLEOTIDE SEQUENCE [LARGE SCALE MRNA] (ISOFORM 1)</scope>
    <source>
        <tissue>Brain</tissue>
    </source>
</reference>
<reference key="3">
    <citation type="journal article" date="2004" name="Nature">
        <title>The DNA sequence and comparative analysis of human chromosome 10.</title>
        <authorList>
            <person name="Deloukas P."/>
            <person name="Earthrowl M.E."/>
            <person name="Grafham D.V."/>
            <person name="Rubenfield M."/>
            <person name="French L."/>
            <person name="Steward C.A."/>
            <person name="Sims S.K."/>
            <person name="Jones M.C."/>
            <person name="Searle S."/>
            <person name="Scott C."/>
            <person name="Howe K."/>
            <person name="Hunt S.E."/>
            <person name="Andrews T.D."/>
            <person name="Gilbert J.G.R."/>
            <person name="Swarbreck D."/>
            <person name="Ashurst J.L."/>
            <person name="Taylor A."/>
            <person name="Battles J."/>
            <person name="Bird C.P."/>
            <person name="Ainscough R."/>
            <person name="Almeida J.P."/>
            <person name="Ashwell R.I.S."/>
            <person name="Ambrose K.D."/>
            <person name="Babbage A.K."/>
            <person name="Bagguley C.L."/>
            <person name="Bailey J."/>
            <person name="Banerjee R."/>
            <person name="Bates K."/>
            <person name="Beasley H."/>
            <person name="Bray-Allen S."/>
            <person name="Brown A.J."/>
            <person name="Brown J.Y."/>
            <person name="Burford D.C."/>
            <person name="Burrill W."/>
            <person name="Burton J."/>
            <person name="Cahill P."/>
            <person name="Camire D."/>
            <person name="Carter N.P."/>
            <person name="Chapman J.C."/>
            <person name="Clark S.Y."/>
            <person name="Clarke G."/>
            <person name="Clee C.M."/>
            <person name="Clegg S."/>
            <person name="Corby N."/>
            <person name="Coulson A."/>
            <person name="Dhami P."/>
            <person name="Dutta I."/>
            <person name="Dunn M."/>
            <person name="Faulkner L."/>
            <person name="Frankish A."/>
            <person name="Frankland J.A."/>
            <person name="Garner P."/>
            <person name="Garnett J."/>
            <person name="Gribble S."/>
            <person name="Griffiths C."/>
            <person name="Grocock R."/>
            <person name="Gustafson E."/>
            <person name="Hammond S."/>
            <person name="Harley J.L."/>
            <person name="Hart E."/>
            <person name="Heath P.D."/>
            <person name="Ho T.P."/>
            <person name="Hopkins B."/>
            <person name="Horne J."/>
            <person name="Howden P.J."/>
            <person name="Huckle E."/>
            <person name="Hynds C."/>
            <person name="Johnson C."/>
            <person name="Johnson D."/>
            <person name="Kana A."/>
            <person name="Kay M."/>
            <person name="Kimberley A.M."/>
            <person name="Kershaw J.K."/>
            <person name="Kokkinaki M."/>
            <person name="Laird G.K."/>
            <person name="Lawlor S."/>
            <person name="Lee H.M."/>
            <person name="Leongamornlert D.A."/>
            <person name="Laird G."/>
            <person name="Lloyd C."/>
            <person name="Lloyd D.M."/>
            <person name="Loveland J."/>
            <person name="Lovell J."/>
            <person name="McLaren S."/>
            <person name="McLay K.E."/>
            <person name="McMurray A."/>
            <person name="Mashreghi-Mohammadi M."/>
            <person name="Matthews L."/>
            <person name="Milne S."/>
            <person name="Nickerson T."/>
            <person name="Nguyen M."/>
            <person name="Overton-Larty E."/>
            <person name="Palmer S.A."/>
            <person name="Pearce A.V."/>
            <person name="Peck A.I."/>
            <person name="Pelan S."/>
            <person name="Phillimore B."/>
            <person name="Porter K."/>
            <person name="Rice C.M."/>
            <person name="Rogosin A."/>
            <person name="Ross M.T."/>
            <person name="Sarafidou T."/>
            <person name="Sehra H.K."/>
            <person name="Shownkeen R."/>
            <person name="Skuce C.D."/>
            <person name="Smith M."/>
            <person name="Standring L."/>
            <person name="Sycamore N."/>
            <person name="Tester J."/>
            <person name="Thorpe A."/>
            <person name="Torcasso W."/>
            <person name="Tracey A."/>
            <person name="Tromans A."/>
            <person name="Tsolas J."/>
            <person name="Wall M."/>
            <person name="Walsh J."/>
            <person name="Wang H."/>
            <person name="Weinstock K."/>
            <person name="West A.P."/>
            <person name="Willey D.L."/>
            <person name="Whitehead S.L."/>
            <person name="Wilming L."/>
            <person name="Wray P.W."/>
            <person name="Young L."/>
            <person name="Chen Y."/>
            <person name="Lovering R.C."/>
            <person name="Moschonas N.K."/>
            <person name="Siebert R."/>
            <person name="Fechtel K."/>
            <person name="Bentley D."/>
            <person name="Durbin R.M."/>
            <person name="Hubbard T."/>
            <person name="Doucette-Stamm L."/>
            <person name="Beck S."/>
            <person name="Smith D.R."/>
            <person name="Rogers J."/>
        </authorList>
    </citation>
    <scope>NUCLEOTIDE SEQUENCE [LARGE SCALE GENOMIC DNA]</scope>
</reference>
<reference key="4">
    <citation type="submission" date="2005-09" db="EMBL/GenBank/DDBJ databases">
        <authorList>
            <person name="Mural R.J."/>
            <person name="Istrail S."/>
            <person name="Sutton G.G."/>
            <person name="Florea L."/>
            <person name="Halpern A.L."/>
            <person name="Mobarry C.M."/>
            <person name="Lippert R."/>
            <person name="Walenz B."/>
            <person name="Shatkay H."/>
            <person name="Dew I."/>
            <person name="Miller J.R."/>
            <person name="Flanigan M.J."/>
            <person name="Edwards N.J."/>
            <person name="Bolanos R."/>
            <person name="Fasulo D."/>
            <person name="Halldorsson B.V."/>
            <person name="Hannenhalli S."/>
            <person name="Turner R."/>
            <person name="Yooseph S."/>
            <person name="Lu F."/>
            <person name="Nusskern D.R."/>
            <person name="Shue B.C."/>
            <person name="Zheng X.H."/>
            <person name="Zhong F."/>
            <person name="Delcher A.L."/>
            <person name="Huson D.H."/>
            <person name="Kravitz S.A."/>
            <person name="Mouchard L."/>
            <person name="Reinert K."/>
            <person name="Remington K.A."/>
            <person name="Clark A.G."/>
            <person name="Waterman M.S."/>
            <person name="Eichler E.E."/>
            <person name="Adams M.D."/>
            <person name="Hunkapiller M.W."/>
            <person name="Myers E.W."/>
            <person name="Venter J.C."/>
        </authorList>
    </citation>
    <scope>NUCLEOTIDE SEQUENCE [LARGE SCALE GENOMIC DNA]</scope>
</reference>
<reference key="5">
    <citation type="journal article" date="2004" name="Genome Res.">
        <title>The status, quality, and expansion of the NIH full-length cDNA project: the Mammalian Gene Collection (MGC).</title>
        <authorList>
            <consortium name="The MGC Project Team"/>
        </authorList>
    </citation>
    <scope>NUCLEOTIDE SEQUENCE [LARGE SCALE MRNA] (ISOFORM 1)</scope>
</reference>
<reference key="6">
    <citation type="journal article" date="2013" name="FEBS Lett.">
        <title>EFA6 activates Arf6 and participates in its targeting to the Flemming body during cytokinesis.</title>
        <authorList>
            <person name="Ueda T."/>
            <person name="Hanai A."/>
            <person name="Takei T."/>
            <person name="Kubo K."/>
            <person name="Ohgi M."/>
            <person name="Sakagami H."/>
            <person name="Takahashi S."/>
            <person name="Shin H.W."/>
            <person name="Nakayama K."/>
        </authorList>
    </citation>
    <scope>FUNCTION</scope>
    <scope>SUBCELLULAR LOCATION</scope>
    <scope>MUTAGENESIS OF GLU-621 AND 765-ARG-LYS-766</scope>
</reference>
<evidence type="ECO:0000250" key="1">
    <source>
        <dbReference type="UniProtKB" id="Q5DTT2"/>
    </source>
</evidence>
<evidence type="ECO:0000255" key="2"/>
<evidence type="ECO:0000255" key="3">
    <source>
        <dbReference type="PROSITE-ProRule" id="PRU00145"/>
    </source>
</evidence>
<evidence type="ECO:0000255" key="4">
    <source>
        <dbReference type="PROSITE-ProRule" id="PRU00189"/>
    </source>
</evidence>
<evidence type="ECO:0000256" key="5">
    <source>
        <dbReference type="SAM" id="MobiDB-lite"/>
    </source>
</evidence>
<evidence type="ECO:0000269" key="6">
    <source>
    </source>
</evidence>
<evidence type="ECO:0000269" key="7">
    <source>
    </source>
</evidence>
<evidence type="ECO:0000303" key="8">
    <source>
    </source>
</evidence>
<evidence type="ECO:0000303" key="9">
    <source>
    </source>
</evidence>
<evidence type="ECO:0000305" key="10"/>